<dbReference type="EC" id="2.7.1.11" evidence="1"/>
<dbReference type="EMBL" id="CP000057">
    <property type="protein sequence ID" value="AAX88019.1"/>
    <property type="molecule type" value="Genomic_DNA"/>
</dbReference>
<dbReference type="RefSeq" id="WP_011272327.1">
    <property type="nucleotide sequence ID" value="NC_007146.2"/>
</dbReference>
<dbReference type="SMR" id="Q4QLS8"/>
<dbReference type="KEGG" id="hit:NTHI1154"/>
<dbReference type="HOGENOM" id="CLU_020655_0_1_6"/>
<dbReference type="UniPathway" id="UPA00109">
    <property type="reaction ID" value="UER00182"/>
</dbReference>
<dbReference type="Proteomes" id="UP000002525">
    <property type="component" value="Chromosome"/>
</dbReference>
<dbReference type="GO" id="GO:0005945">
    <property type="term" value="C:6-phosphofructokinase complex"/>
    <property type="evidence" value="ECO:0007669"/>
    <property type="project" value="TreeGrafter"/>
</dbReference>
<dbReference type="GO" id="GO:0003872">
    <property type="term" value="F:6-phosphofructokinase activity"/>
    <property type="evidence" value="ECO:0007669"/>
    <property type="project" value="UniProtKB-UniRule"/>
</dbReference>
<dbReference type="GO" id="GO:0016208">
    <property type="term" value="F:AMP binding"/>
    <property type="evidence" value="ECO:0007669"/>
    <property type="project" value="TreeGrafter"/>
</dbReference>
<dbReference type="GO" id="GO:0005524">
    <property type="term" value="F:ATP binding"/>
    <property type="evidence" value="ECO:0007669"/>
    <property type="project" value="UniProtKB-KW"/>
</dbReference>
<dbReference type="GO" id="GO:0070095">
    <property type="term" value="F:fructose-6-phosphate binding"/>
    <property type="evidence" value="ECO:0007669"/>
    <property type="project" value="TreeGrafter"/>
</dbReference>
<dbReference type="GO" id="GO:0042802">
    <property type="term" value="F:identical protein binding"/>
    <property type="evidence" value="ECO:0007669"/>
    <property type="project" value="TreeGrafter"/>
</dbReference>
<dbReference type="GO" id="GO:0046872">
    <property type="term" value="F:metal ion binding"/>
    <property type="evidence" value="ECO:0007669"/>
    <property type="project" value="UniProtKB-KW"/>
</dbReference>
<dbReference type="GO" id="GO:0048029">
    <property type="term" value="F:monosaccharide binding"/>
    <property type="evidence" value="ECO:0007669"/>
    <property type="project" value="TreeGrafter"/>
</dbReference>
<dbReference type="GO" id="GO:0061621">
    <property type="term" value="P:canonical glycolysis"/>
    <property type="evidence" value="ECO:0007669"/>
    <property type="project" value="TreeGrafter"/>
</dbReference>
<dbReference type="GO" id="GO:0030388">
    <property type="term" value="P:fructose 1,6-bisphosphate metabolic process"/>
    <property type="evidence" value="ECO:0007669"/>
    <property type="project" value="TreeGrafter"/>
</dbReference>
<dbReference type="GO" id="GO:0006002">
    <property type="term" value="P:fructose 6-phosphate metabolic process"/>
    <property type="evidence" value="ECO:0007669"/>
    <property type="project" value="InterPro"/>
</dbReference>
<dbReference type="CDD" id="cd00763">
    <property type="entry name" value="Bacterial_PFK"/>
    <property type="match status" value="1"/>
</dbReference>
<dbReference type="FunFam" id="3.40.50.450:FF:000001">
    <property type="entry name" value="ATP-dependent 6-phosphofructokinase"/>
    <property type="match status" value="1"/>
</dbReference>
<dbReference type="FunFam" id="3.40.50.460:FF:000002">
    <property type="entry name" value="ATP-dependent 6-phosphofructokinase"/>
    <property type="match status" value="1"/>
</dbReference>
<dbReference type="Gene3D" id="3.40.50.450">
    <property type="match status" value="1"/>
</dbReference>
<dbReference type="Gene3D" id="3.40.50.460">
    <property type="entry name" value="Phosphofructokinase domain"/>
    <property type="match status" value="1"/>
</dbReference>
<dbReference type="HAMAP" id="MF_00339">
    <property type="entry name" value="Phosphofructokinase_I_B1"/>
    <property type="match status" value="1"/>
</dbReference>
<dbReference type="InterPro" id="IPR022953">
    <property type="entry name" value="ATP_PFK"/>
</dbReference>
<dbReference type="InterPro" id="IPR012003">
    <property type="entry name" value="ATP_PFK_prok-type"/>
</dbReference>
<dbReference type="InterPro" id="IPR012828">
    <property type="entry name" value="PFKA_ATP_prok"/>
</dbReference>
<dbReference type="InterPro" id="IPR015912">
    <property type="entry name" value="Phosphofructokinase_CS"/>
</dbReference>
<dbReference type="InterPro" id="IPR000023">
    <property type="entry name" value="Phosphofructokinase_dom"/>
</dbReference>
<dbReference type="InterPro" id="IPR035966">
    <property type="entry name" value="PKF_sf"/>
</dbReference>
<dbReference type="NCBIfam" id="TIGR02482">
    <property type="entry name" value="PFKA_ATP"/>
    <property type="match status" value="1"/>
</dbReference>
<dbReference type="NCBIfam" id="NF002872">
    <property type="entry name" value="PRK03202.1"/>
    <property type="match status" value="1"/>
</dbReference>
<dbReference type="PANTHER" id="PTHR13697:SF4">
    <property type="entry name" value="ATP-DEPENDENT 6-PHOSPHOFRUCTOKINASE"/>
    <property type="match status" value="1"/>
</dbReference>
<dbReference type="PANTHER" id="PTHR13697">
    <property type="entry name" value="PHOSPHOFRUCTOKINASE"/>
    <property type="match status" value="1"/>
</dbReference>
<dbReference type="Pfam" id="PF00365">
    <property type="entry name" value="PFK"/>
    <property type="match status" value="1"/>
</dbReference>
<dbReference type="PIRSF" id="PIRSF000532">
    <property type="entry name" value="ATP_PFK_prok"/>
    <property type="match status" value="1"/>
</dbReference>
<dbReference type="PRINTS" id="PR00476">
    <property type="entry name" value="PHFRCTKINASE"/>
</dbReference>
<dbReference type="SUPFAM" id="SSF53784">
    <property type="entry name" value="Phosphofructokinase"/>
    <property type="match status" value="1"/>
</dbReference>
<dbReference type="PROSITE" id="PS00433">
    <property type="entry name" value="PHOSPHOFRUCTOKINASE"/>
    <property type="match status" value="1"/>
</dbReference>
<sequence>MIKKIAVLTSGGDAPGMNAAIRGVVRSALAEGLEVFGIYDGYQGLYNNKIKQLNRYSVSDVINRGGTFLGSARFPEFKDPNVRAKCAEILRSHGIDALVVIGGDGSYMGAKLLTEEHGFPCVGLPGTIDNDVAGTDYTIGYQTALQTAVDAIDRLRDTSSSHQRISIVEIMGRHCSDLTISAGIAGGCEYIVASEIEFNREELIQQIERSIIRGKRHAIIAITELLTDVHSLAKEIEARVGHETRATVLGHIQRGGSPCAFDRILASRMGAYAVDLLLQGKGGYCVGIQNEQLVHHDIIDAINNMQRVFKADWLKVAKRLE</sequence>
<name>PFKA_HAEI8</name>
<feature type="chain" id="PRO_1000059765" description="ATP-dependent 6-phosphofructokinase">
    <location>
        <begin position="1"/>
        <end position="321"/>
    </location>
</feature>
<feature type="active site" description="Proton acceptor" evidence="1">
    <location>
        <position position="129"/>
    </location>
</feature>
<feature type="binding site" evidence="1">
    <location>
        <position position="12"/>
    </location>
    <ligand>
        <name>ATP</name>
        <dbReference type="ChEBI" id="CHEBI:30616"/>
    </ligand>
</feature>
<feature type="binding site" evidence="1">
    <location>
        <begin position="22"/>
        <end position="26"/>
    </location>
    <ligand>
        <name>ADP</name>
        <dbReference type="ChEBI" id="CHEBI:456216"/>
        <note>allosteric activator; ligand shared between dimeric partners</note>
    </ligand>
</feature>
<feature type="binding site" evidence="1">
    <location>
        <begin position="55"/>
        <end position="60"/>
    </location>
    <ligand>
        <name>ADP</name>
        <dbReference type="ChEBI" id="CHEBI:456216"/>
        <note>allosteric activator; ligand shared between dimeric partners</note>
    </ligand>
</feature>
<feature type="binding site" evidence="1">
    <location>
        <begin position="73"/>
        <end position="74"/>
    </location>
    <ligand>
        <name>ATP</name>
        <dbReference type="ChEBI" id="CHEBI:30616"/>
    </ligand>
</feature>
<feature type="binding site" evidence="1">
    <location>
        <begin position="103"/>
        <end position="106"/>
    </location>
    <ligand>
        <name>ATP</name>
        <dbReference type="ChEBI" id="CHEBI:30616"/>
    </ligand>
</feature>
<feature type="binding site" evidence="1">
    <location>
        <position position="104"/>
    </location>
    <ligand>
        <name>Mg(2+)</name>
        <dbReference type="ChEBI" id="CHEBI:18420"/>
        <note>catalytic</note>
    </ligand>
</feature>
<feature type="binding site" description="in other chain" evidence="1">
    <location>
        <begin position="127"/>
        <end position="129"/>
    </location>
    <ligand>
        <name>substrate</name>
        <note>ligand shared between dimeric partners</note>
    </ligand>
</feature>
<feature type="binding site" description="in other chain" evidence="1">
    <location>
        <position position="156"/>
    </location>
    <ligand>
        <name>ADP</name>
        <dbReference type="ChEBI" id="CHEBI:456216"/>
        <note>allosteric activator; ligand shared between dimeric partners</note>
    </ligand>
</feature>
<feature type="binding site" evidence="1">
    <location>
        <position position="164"/>
    </location>
    <ligand>
        <name>substrate</name>
        <note>ligand shared between dimeric partners</note>
    </ligand>
</feature>
<feature type="binding site" description="in other chain" evidence="1">
    <location>
        <begin position="171"/>
        <end position="173"/>
    </location>
    <ligand>
        <name>substrate</name>
        <note>ligand shared between dimeric partners</note>
    </ligand>
</feature>
<feature type="binding site" description="in other chain" evidence="1">
    <location>
        <begin position="187"/>
        <end position="189"/>
    </location>
    <ligand>
        <name>ADP</name>
        <dbReference type="ChEBI" id="CHEBI:456216"/>
        <note>allosteric activator; ligand shared between dimeric partners</note>
    </ligand>
</feature>
<feature type="binding site" description="in other chain" evidence="1">
    <location>
        <position position="213"/>
    </location>
    <ligand>
        <name>ADP</name>
        <dbReference type="ChEBI" id="CHEBI:456216"/>
        <note>allosteric activator; ligand shared between dimeric partners</note>
    </ligand>
</feature>
<feature type="binding site" description="in other chain" evidence="1">
    <location>
        <begin position="215"/>
        <end position="217"/>
    </location>
    <ligand>
        <name>ADP</name>
        <dbReference type="ChEBI" id="CHEBI:456216"/>
        <note>allosteric activator; ligand shared between dimeric partners</note>
    </ligand>
</feature>
<feature type="binding site" description="in other chain" evidence="1">
    <location>
        <position position="224"/>
    </location>
    <ligand>
        <name>substrate</name>
        <note>ligand shared between dimeric partners</note>
    </ligand>
</feature>
<feature type="binding site" evidence="1">
    <location>
        <position position="245"/>
    </location>
    <ligand>
        <name>substrate</name>
        <note>ligand shared between dimeric partners</note>
    </ligand>
</feature>
<feature type="binding site" description="in other chain" evidence="1">
    <location>
        <begin position="251"/>
        <end position="254"/>
    </location>
    <ligand>
        <name>substrate</name>
        <note>ligand shared between dimeric partners</note>
    </ligand>
</feature>
<accession>Q4QLS8</accession>
<comment type="function">
    <text evidence="1">Catalyzes the phosphorylation of D-fructose 6-phosphate to fructose 1,6-bisphosphate by ATP, the first committing step of glycolysis.</text>
</comment>
<comment type="catalytic activity">
    <reaction evidence="1">
        <text>beta-D-fructose 6-phosphate + ATP = beta-D-fructose 1,6-bisphosphate + ADP + H(+)</text>
        <dbReference type="Rhea" id="RHEA:16109"/>
        <dbReference type="ChEBI" id="CHEBI:15378"/>
        <dbReference type="ChEBI" id="CHEBI:30616"/>
        <dbReference type="ChEBI" id="CHEBI:32966"/>
        <dbReference type="ChEBI" id="CHEBI:57634"/>
        <dbReference type="ChEBI" id="CHEBI:456216"/>
        <dbReference type="EC" id="2.7.1.11"/>
    </reaction>
</comment>
<comment type="cofactor">
    <cofactor evidence="1">
        <name>Mg(2+)</name>
        <dbReference type="ChEBI" id="CHEBI:18420"/>
    </cofactor>
</comment>
<comment type="activity regulation">
    <text evidence="1">Allosterically activated by ADP and other diphosphonucleosides, and allosterically inhibited by phosphoenolpyruvate.</text>
</comment>
<comment type="pathway">
    <text evidence="1">Carbohydrate degradation; glycolysis; D-glyceraldehyde 3-phosphate and glycerone phosphate from D-glucose: step 3/4.</text>
</comment>
<comment type="subunit">
    <text evidence="1">Homotetramer.</text>
</comment>
<comment type="subcellular location">
    <subcellularLocation>
        <location evidence="1">Cytoplasm</location>
    </subcellularLocation>
</comment>
<comment type="similarity">
    <text evidence="1">Belongs to the phosphofructokinase type A (PFKA) family. ATP-dependent PFK group I subfamily. Prokaryotic clade 'B1' sub-subfamily.</text>
</comment>
<evidence type="ECO:0000255" key="1">
    <source>
        <dbReference type="HAMAP-Rule" id="MF_00339"/>
    </source>
</evidence>
<reference key="1">
    <citation type="journal article" date="2005" name="J. Bacteriol.">
        <title>Genomic sequence of an otitis media isolate of nontypeable Haemophilus influenzae: comparative study with H. influenzae serotype d, strain KW20.</title>
        <authorList>
            <person name="Harrison A."/>
            <person name="Dyer D.W."/>
            <person name="Gillaspy A."/>
            <person name="Ray W.C."/>
            <person name="Mungur R."/>
            <person name="Carson M.B."/>
            <person name="Zhong H."/>
            <person name="Gipson J."/>
            <person name="Gipson M."/>
            <person name="Johnson L.S."/>
            <person name="Lewis L."/>
            <person name="Bakaletz L.O."/>
            <person name="Munson R.S. Jr."/>
        </authorList>
    </citation>
    <scope>NUCLEOTIDE SEQUENCE [LARGE SCALE GENOMIC DNA]</scope>
    <source>
        <strain>86-028NP</strain>
    </source>
</reference>
<protein>
    <recommendedName>
        <fullName evidence="1">ATP-dependent 6-phosphofructokinase</fullName>
        <shortName evidence="1">ATP-PFK</shortName>
        <shortName evidence="1">Phosphofructokinase</shortName>
        <ecNumber evidence="1">2.7.1.11</ecNumber>
    </recommendedName>
    <alternativeName>
        <fullName evidence="1">Phosphohexokinase</fullName>
    </alternativeName>
</protein>
<gene>
    <name evidence="1" type="primary">pfkA</name>
    <name type="ordered locus">NTHI1154</name>
</gene>
<keyword id="KW-0021">Allosteric enzyme</keyword>
<keyword id="KW-0067">ATP-binding</keyword>
<keyword id="KW-0963">Cytoplasm</keyword>
<keyword id="KW-0324">Glycolysis</keyword>
<keyword id="KW-0418">Kinase</keyword>
<keyword id="KW-0460">Magnesium</keyword>
<keyword id="KW-0479">Metal-binding</keyword>
<keyword id="KW-0547">Nucleotide-binding</keyword>
<keyword id="KW-0808">Transferase</keyword>
<organism>
    <name type="scientific">Haemophilus influenzae (strain 86-028NP)</name>
    <dbReference type="NCBI Taxonomy" id="281310"/>
    <lineage>
        <taxon>Bacteria</taxon>
        <taxon>Pseudomonadati</taxon>
        <taxon>Pseudomonadota</taxon>
        <taxon>Gammaproteobacteria</taxon>
        <taxon>Pasteurellales</taxon>
        <taxon>Pasteurellaceae</taxon>
        <taxon>Haemophilus</taxon>
    </lineage>
</organism>
<proteinExistence type="inferred from homology"/>